<reference key="1">
    <citation type="journal article" date="1998" name="Science">
        <title>Genome sequence of the nematode C. elegans: a platform for investigating biology.</title>
        <authorList>
            <consortium name="The C. elegans sequencing consortium"/>
        </authorList>
    </citation>
    <scope>NUCLEOTIDE SEQUENCE [LARGE SCALE GENOMIC DNA]</scope>
    <source>
        <strain>Bristol N2</strain>
    </source>
</reference>
<gene>
    <name evidence="3" type="ORF">C30G12.1</name>
</gene>
<organism>
    <name type="scientific">Caenorhabditis elegans</name>
    <dbReference type="NCBI Taxonomy" id="6239"/>
    <lineage>
        <taxon>Eukaryota</taxon>
        <taxon>Metazoa</taxon>
        <taxon>Ecdysozoa</taxon>
        <taxon>Nematoda</taxon>
        <taxon>Chromadorea</taxon>
        <taxon>Rhabditida</taxon>
        <taxon>Rhabditina</taxon>
        <taxon>Rhabditomorpha</taxon>
        <taxon>Rhabditoidea</taxon>
        <taxon>Rhabditidae</taxon>
        <taxon>Peloderinae</taxon>
        <taxon>Caenorhabditis</taxon>
    </lineage>
</organism>
<feature type="chain" id="PRO_0000065209" description="Uncharacterized protein C30G12.1">
    <location>
        <begin position="1"/>
        <end position="453"/>
    </location>
</feature>
<feature type="region of interest" description="Disordered" evidence="1">
    <location>
        <begin position="140"/>
        <end position="161"/>
    </location>
</feature>
<feature type="region of interest" description="Disordered" evidence="1">
    <location>
        <begin position="311"/>
        <end position="332"/>
    </location>
</feature>
<feature type="splice variant" id="VSP_059540" description="In isoform b." evidence="2">
    <location>
        <begin position="196"/>
        <end position="206"/>
    </location>
</feature>
<keyword id="KW-0025">Alternative splicing</keyword>
<keyword id="KW-1185">Reference proteome</keyword>
<protein>
    <recommendedName>
        <fullName>Uncharacterized protein C30G12.1</fullName>
    </recommendedName>
</protein>
<evidence type="ECO:0000256" key="1">
    <source>
        <dbReference type="SAM" id="MobiDB-lite"/>
    </source>
</evidence>
<evidence type="ECO:0000305" key="2"/>
<evidence type="ECO:0000312" key="3">
    <source>
        <dbReference type="WormBase" id="C30G12.1a"/>
    </source>
</evidence>
<evidence type="ECO:0000312" key="4">
    <source>
        <dbReference type="WormBase" id="C30G12.1b"/>
    </source>
</evidence>
<proteinExistence type="predicted"/>
<accession>Q09255</accession>
<accession>A0A131MAR8</accession>
<accession>A0A131MAW6</accession>
<sequence length="453" mass="50812">MVKSLHYFILPLIGNALILNTPPEYQPGYGYVGPACAVFDSTLFLHGVSKRKLNDHELHIFSSYQHDLSAFKDSSSSFDSFEASFPTIPKFCGGYDDSIEVVLDSCIVRNNHVYVGDHLIRPLTNFEKQKIQLVKMRRMYGESKRKRSKRSSKPLPGTRPQRDFSEMLHKLLNINSTVTSRFLPVVSQSPLFAMEGPWQNLFELGKDKDMIELLAASQFKPQLPPVASVPVAPVIDITKIDSPYRATFTTMKPRKSQKPEKKKEVFNVFTTKTNPQITTTTMTTTTRTSTAIPTTTTTPRQISLQTIPFSTTTRQPNFDKTKTPATMPSASSSSLSSIQTVVDPIILKLISKALEKNEMIDEYSLKQALSMRNVATTTTPLPLRFILPTPAAPNPFLPSTRVGGLSHNHLFIPHQPFTTLVSTDSRYSAPNPLSHRLPNEICRVHMNSNPFHF</sequence>
<dbReference type="EMBL" id="BX284602">
    <property type="protein sequence ID" value="CZR14455.1"/>
    <property type="molecule type" value="Genomic_DNA"/>
</dbReference>
<dbReference type="EMBL" id="BX284602">
    <property type="protein sequence ID" value="CZR14456.1"/>
    <property type="molecule type" value="Genomic_DNA"/>
</dbReference>
<dbReference type="RefSeq" id="NP_001309540.1">
    <molecule id="Q09255-1"/>
    <property type="nucleotide sequence ID" value="NM_001322737.2"/>
</dbReference>
<dbReference type="RefSeq" id="NP_001309541.1">
    <molecule id="Q09255-3"/>
    <property type="nucleotide sequence ID" value="NM_001322738.3"/>
</dbReference>
<dbReference type="FunCoup" id="Q09255">
    <property type="interactions" value="1522"/>
</dbReference>
<dbReference type="PaxDb" id="6239-C30G12.1"/>
<dbReference type="EnsemblMetazoa" id="C30G12.1a.1">
    <molecule id="Q09255-1"/>
    <property type="protein sequence ID" value="C30G12.1a.1"/>
    <property type="gene ID" value="WBGene00016273"/>
</dbReference>
<dbReference type="EnsemblMetazoa" id="C30G12.1b.1">
    <molecule id="Q09255-3"/>
    <property type="protein sequence ID" value="C30G12.1b.1"/>
    <property type="gene ID" value="WBGene00016273"/>
</dbReference>
<dbReference type="GeneID" id="183060"/>
<dbReference type="KEGG" id="cel:CELE_C30G12.1"/>
<dbReference type="UCSC" id="C30G12.1">
    <molecule id="Q09255-1"/>
    <property type="organism name" value="c. elegans"/>
</dbReference>
<dbReference type="AGR" id="WB:WBGene00016273"/>
<dbReference type="CTD" id="183060"/>
<dbReference type="WormBase" id="C30G12.1a">
    <molecule id="Q09255-1"/>
    <property type="protein sequence ID" value="CE51550"/>
    <property type="gene ID" value="WBGene00016273"/>
</dbReference>
<dbReference type="WormBase" id="C30G12.1b">
    <molecule id="Q09255-3"/>
    <property type="protein sequence ID" value="CE51308"/>
    <property type="gene ID" value="WBGene00016273"/>
</dbReference>
<dbReference type="eggNOG" id="ENOG502ST0D">
    <property type="taxonomic scope" value="Eukaryota"/>
</dbReference>
<dbReference type="HOGENOM" id="CLU_608640_0_0_1"/>
<dbReference type="InParanoid" id="Q09255"/>
<dbReference type="OrthoDB" id="5877245at2759"/>
<dbReference type="PRO" id="PR:Q09255"/>
<dbReference type="Proteomes" id="UP000001940">
    <property type="component" value="Chromosome II"/>
</dbReference>
<dbReference type="Bgee" id="WBGene00016273">
    <property type="expression patterns" value="Expressed in germ line (C elegans) and 4 other cell types or tissues"/>
</dbReference>
<dbReference type="Gene3D" id="3.30.1120.50">
    <property type="entry name" value="Pepsin inhibitor-3"/>
    <property type="match status" value="1"/>
</dbReference>
<dbReference type="InterPro" id="IPR038412">
    <property type="entry name" value="Pepsin-I3_sf"/>
</dbReference>
<dbReference type="InterPro" id="IPR051901">
    <property type="entry name" value="Protease_Inhibitor_I33"/>
</dbReference>
<dbReference type="PANTHER" id="PTHR37969">
    <property type="entry name" value="PROTEIN CBG07421-RELATED"/>
    <property type="match status" value="1"/>
</dbReference>
<dbReference type="PANTHER" id="PTHR37969:SF3">
    <property type="entry name" value="PROTEIN CBG13131"/>
    <property type="match status" value="1"/>
</dbReference>
<dbReference type="SUPFAM" id="SSF55149">
    <property type="entry name" value="Pepsin inhibitor-3"/>
    <property type="match status" value="1"/>
</dbReference>
<comment type="alternative products">
    <event type="alternative splicing"/>
    <isoform>
        <id>Q09255-1</id>
        <name evidence="3">a</name>
        <sequence type="displayed"/>
    </isoform>
    <isoform>
        <id>Q09255-3</id>
        <name evidence="4">b</name>
        <sequence type="described" ref="VSP_059540"/>
    </isoform>
</comment>
<name>YQB1_CAEEL</name>